<accession>Q0JFZ0</accession>
<accession>A9JX09</accession>
<accession>Q941Z7</accession>
<comment type="function">
    <text evidence="3 4 7 8 10">Transcription activator that binds to the DNA motif 5'-CACGTGG-3' in the promoter of iron (Fe) deficiency-inducible genes as well as of genes involved in iron homeostasis, thus contributing to basal tolerance to iron deficiency, iron uptake from soil and iron transport, particularly during seed maturation and germination (PubMed:16887895, PubMed:17559517, PubMed:21331630, PubMed:26224556). Promotes the accumulation of mugineic acid family phytosiderophores (MAs) (PubMed:17559517). Required for ethylene-mediated signaling during iron deficiency responses (PubMed:21112958). Improves growth and yield, especially in calcareous soil with low iron availability. Promotes iron concentration in shoots and grain (PubMed:21331630).</text>
</comment>
<comment type="subunit">
    <text evidence="13">Forms homodimers (PubMed:31574173). Interacts with BHLH156 in the nucleus (PubMed:31574173).</text>
</comment>
<comment type="subcellular location">
    <subcellularLocation>
        <location evidence="1 2 13">Nucleus</location>
    </subcellularLocation>
    <subcellularLocation>
        <location evidence="13">Cytoplasm</location>
    </subcellularLocation>
    <text evidence="13">Localized partially to the nucleus under iron deficiency conditions.</text>
</comment>
<comment type="tissue specificity">
    <text evidence="3 8">Expressed constitutively at low levels in the roots (PubMed:16887895, PubMed:21331630). Also observed in flowers, developing seeds, embryos and vascular bundles (PubMed:21331630).</text>
</comment>
<comment type="developmental stage">
    <text evidence="8">During seeds germination, detected in embryos. In vegetative tissues under iron-sufficient, restricted almost exclusively to vascular bundles of roots and leaves, and to the root exodermis. In response to iron deficiency, accumulates in all tissues of roots and leaves.</text>
</comment>
<comment type="induction">
    <text evidence="3 5 6 7 8 9 11 12">Strongly induced in both roots and shoots during iron (Fe) deficiency stress (PubMed:16887895, PubMed:18025467, PubMed:19737364, PubMed:21112958, PubMed:21331630, PubMed:24280375). Ethylene enhances the iron deficiency-mediated induction (PubMed:21112958). Induced by arsenate (AsV25 and AsV50); this induction is repressed by nitric oxide (NO) (PubMed:26793232). Accumulates under cadmium (Cd) stress; this induction is inhibited by the DNA methyltransferase inhibitor 5-aza-2-deoxycytidine (Aza) (PubMed:27412910).</text>
</comment>
<comment type="disruption phenotype">
    <text evidence="4 7 8">Reduced growth compared after germination (PubMed:21331630). Lower mugineic acid family phytosiderophores (MAs) secretion and hypersensitivity to iron (Fe) deficiency (PubMed:17559517). Reduced induction of genes involved in iron homeostasis upon iron deficiency and ethylene treatment (PubMed:21112958).</text>
</comment>
<comment type="similarity">
    <text evidence="16">Belongs to the bHLH protein family.</text>
</comment>
<proteinExistence type="evidence at protein level"/>
<feature type="chain" id="PRO_0000442063" description="Protein IRON-RELATED TRANSCRIPTION FACTOR 2">
    <location>
        <begin position="1"/>
        <end position="247"/>
    </location>
</feature>
<feature type="domain" description="bHLH" evidence="2">
    <location>
        <begin position="68"/>
        <end position="119"/>
    </location>
</feature>
<feature type="region of interest" description="Basic motif" evidence="2">
    <location>
        <begin position="68"/>
        <end position="81"/>
    </location>
</feature>
<feature type="region of interest" description="Helix-loop-helix motif" evidence="2">
    <location>
        <begin position="82"/>
        <end position="119"/>
    </location>
</feature>
<feature type="short sequence motif" description="Nuclear localization signal" evidence="1">
    <location>
        <begin position="68"/>
        <end position="75"/>
    </location>
</feature>
<feature type="sequence conflict" description="In Ref. 1; FAA00382." evidence="16" ref="1">
    <original>E</original>
    <variation>K</variation>
    <location>
        <position position="86"/>
    </location>
</feature>
<feature type="sequence conflict" description="In Ref. 1; FAA00382." evidence="16" ref="1">
    <original>L</original>
    <variation>I</variation>
    <location>
        <position position="95"/>
    </location>
</feature>
<feature type="sequence conflict" description="In Ref. 2; BAB64701 and 6; EAZ14859." evidence="16" ref="2 6">
    <original>T</original>
    <variation>TK</variation>
    <location>
        <position position="101"/>
    </location>
</feature>
<sequence length="247" mass="26962">MEQLFVDDPAFASSMSSLEADIFSGAGQLPSSPWLDLDLDDDVQDLSMAPTTANAVSSGYGSGGSGSHRKLSHNAYERDRRKQLNELYSSLRALLPDADHTKLSIPTTVSRVLKYIPELQKQVENLERKKKELTTTSTTNCKPGVLGSQLMSEGMAPIVSATCINDMEIMVQVSLLSNVAGSVLPLSKCIKVLENEGLHFISSSTSSGFGNRTFYSIHLQRSEGTINEECPAFCERLEKVVRNKAKL</sequence>
<name>IRO2_ORYSJ</name>
<gene>
    <name evidence="14" type="primary">IRO2</name>
    <name evidence="15" type="synonym">BHLH056</name>
    <name evidence="16" type="ordered locus">LOC_Os01g72370</name>
    <name evidence="16" type="ordered locus">Os01g0952800</name>
    <name evidence="18" type="ORF">OsJ_04787</name>
    <name evidence="17" type="ORF">P0431G06.13-1</name>
</gene>
<dbReference type="EMBL" id="BR000688">
    <property type="protein sequence ID" value="FAA00382.1"/>
    <property type="molecule type" value="mRNA"/>
</dbReference>
<dbReference type="EMBL" id="AP003683">
    <property type="protein sequence ID" value="BAB64701.1"/>
    <property type="molecule type" value="Genomic_DNA"/>
</dbReference>
<dbReference type="EMBL" id="AP008207">
    <property type="protein sequence ID" value="BAF07338.1"/>
    <property type="molecule type" value="Genomic_DNA"/>
</dbReference>
<dbReference type="EMBL" id="AP014957">
    <property type="protein sequence ID" value="BAS76260.1"/>
    <property type="molecule type" value="Genomic_DNA"/>
</dbReference>
<dbReference type="EMBL" id="CM000138">
    <property type="protein sequence ID" value="EAZ14859.1"/>
    <property type="molecule type" value="Genomic_DNA"/>
</dbReference>
<dbReference type="SMR" id="Q0JFZ0"/>
<dbReference type="FunCoup" id="Q0JFZ0">
    <property type="interactions" value="646"/>
</dbReference>
<dbReference type="STRING" id="39947.Q0JFZ0"/>
<dbReference type="PaxDb" id="39947-Q0JFZ0"/>
<dbReference type="EnsemblPlants" id="Os01t0952800-01">
    <property type="protein sequence ID" value="Os01t0952800-01"/>
    <property type="gene ID" value="Os01g0952800"/>
</dbReference>
<dbReference type="Gramene" id="Os01t0952800-01">
    <property type="protein sequence ID" value="Os01t0952800-01"/>
    <property type="gene ID" value="Os01g0952800"/>
</dbReference>
<dbReference type="KEGG" id="dosa:Os01g0952800"/>
<dbReference type="KEGG" id="osa:4325750"/>
<dbReference type="eggNOG" id="ENOG502RXMR">
    <property type="taxonomic scope" value="Eukaryota"/>
</dbReference>
<dbReference type="HOGENOM" id="CLU_089779_0_0_1"/>
<dbReference type="InParanoid" id="Q0JFZ0"/>
<dbReference type="OMA" id="EKDMKST"/>
<dbReference type="OrthoDB" id="6106870at2759"/>
<dbReference type="Proteomes" id="UP000000763">
    <property type="component" value="Chromosome 1"/>
</dbReference>
<dbReference type="Proteomes" id="UP000007752">
    <property type="component" value="Chromosome 1"/>
</dbReference>
<dbReference type="Proteomes" id="UP000059680">
    <property type="component" value="Chromosome 1"/>
</dbReference>
<dbReference type="ExpressionAtlas" id="Q0JFZ0">
    <property type="expression patterns" value="baseline and differential"/>
</dbReference>
<dbReference type="GO" id="GO:0005737">
    <property type="term" value="C:cytoplasm"/>
    <property type="evidence" value="ECO:0007669"/>
    <property type="project" value="UniProtKB-SubCell"/>
</dbReference>
<dbReference type="GO" id="GO:0090575">
    <property type="term" value="C:RNA polymerase II transcription regulator complex"/>
    <property type="evidence" value="ECO:0000318"/>
    <property type="project" value="GO_Central"/>
</dbReference>
<dbReference type="GO" id="GO:0003700">
    <property type="term" value="F:DNA-binding transcription factor activity"/>
    <property type="evidence" value="ECO:0000314"/>
    <property type="project" value="UniProtKB"/>
</dbReference>
<dbReference type="GO" id="GO:0000981">
    <property type="term" value="F:DNA-binding transcription factor activity, RNA polymerase II-specific"/>
    <property type="evidence" value="ECO:0000318"/>
    <property type="project" value="GO_Central"/>
</dbReference>
<dbReference type="GO" id="GO:0046983">
    <property type="term" value="F:protein dimerization activity"/>
    <property type="evidence" value="ECO:0007669"/>
    <property type="project" value="InterPro"/>
</dbReference>
<dbReference type="GO" id="GO:0000977">
    <property type="term" value="F:RNA polymerase II transcription regulatory region sequence-specific DNA binding"/>
    <property type="evidence" value="ECO:0000318"/>
    <property type="project" value="GO_Central"/>
</dbReference>
<dbReference type="GO" id="GO:0009873">
    <property type="term" value="P:ethylene-activated signaling pathway"/>
    <property type="evidence" value="ECO:0007669"/>
    <property type="project" value="UniProtKB-KW"/>
</dbReference>
<dbReference type="GO" id="GO:0045893">
    <property type="term" value="P:positive regulation of DNA-templated transcription"/>
    <property type="evidence" value="ECO:0000314"/>
    <property type="project" value="UniProtKB"/>
</dbReference>
<dbReference type="GO" id="GO:1900706">
    <property type="term" value="P:positive regulation of siderophore biosynthetic process"/>
    <property type="evidence" value="ECO:0000315"/>
    <property type="project" value="UniProtKB"/>
</dbReference>
<dbReference type="GO" id="GO:0006355">
    <property type="term" value="P:regulation of DNA-templated transcription"/>
    <property type="evidence" value="ECO:0000314"/>
    <property type="project" value="UniProtKB"/>
</dbReference>
<dbReference type="GO" id="GO:0010104">
    <property type="term" value="P:regulation of ethylene-activated signaling pathway"/>
    <property type="evidence" value="ECO:0000315"/>
    <property type="project" value="UniProtKB"/>
</dbReference>
<dbReference type="GO" id="GO:0006357">
    <property type="term" value="P:regulation of transcription by RNA polymerase II"/>
    <property type="evidence" value="ECO:0000318"/>
    <property type="project" value="GO_Central"/>
</dbReference>
<dbReference type="GO" id="GO:0046685">
    <property type="term" value="P:response to arsenic-containing substance"/>
    <property type="evidence" value="ECO:0000270"/>
    <property type="project" value="UniProtKB"/>
</dbReference>
<dbReference type="GO" id="GO:0046686">
    <property type="term" value="P:response to cadmium ion"/>
    <property type="evidence" value="ECO:0000270"/>
    <property type="project" value="UniProtKB"/>
</dbReference>
<dbReference type="GO" id="GO:0009723">
    <property type="term" value="P:response to ethylene"/>
    <property type="evidence" value="ECO:0000270"/>
    <property type="project" value="UniProtKB"/>
</dbReference>
<dbReference type="GO" id="GO:1990641">
    <property type="term" value="P:response to iron ion starvation"/>
    <property type="evidence" value="ECO:0000315"/>
    <property type="project" value="UniProtKB"/>
</dbReference>
<dbReference type="GO" id="GO:0071731">
    <property type="term" value="P:response to nitric oxide"/>
    <property type="evidence" value="ECO:0000270"/>
    <property type="project" value="UniProtKB"/>
</dbReference>
<dbReference type="FunFam" id="4.10.280.10:FF:000074">
    <property type="entry name" value="Transcription factor ORG2"/>
    <property type="match status" value="1"/>
</dbReference>
<dbReference type="Gene3D" id="4.10.280.10">
    <property type="entry name" value="Helix-loop-helix DNA-binding domain"/>
    <property type="match status" value="1"/>
</dbReference>
<dbReference type="InterPro" id="IPR011598">
    <property type="entry name" value="bHLH_dom"/>
</dbReference>
<dbReference type="InterPro" id="IPR036638">
    <property type="entry name" value="HLH_DNA-bd_sf"/>
</dbReference>
<dbReference type="InterPro" id="IPR015660">
    <property type="entry name" value="MASH1/Ascl1a-like"/>
</dbReference>
<dbReference type="PANTHER" id="PTHR13935">
    <property type="entry name" value="ACHAETE-SCUTE TRANSCRIPTION FACTOR-RELATED"/>
    <property type="match status" value="1"/>
</dbReference>
<dbReference type="PANTHER" id="PTHR13935:SF41">
    <property type="entry name" value="TRANSCRIPTION FACTOR ORG2-RELATED"/>
    <property type="match status" value="1"/>
</dbReference>
<dbReference type="Pfam" id="PF00010">
    <property type="entry name" value="HLH"/>
    <property type="match status" value="1"/>
</dbReference>
<dbReference type="SMART" id="SM00353">
    <property type="entry name" value="HLH"/>
    <property type="match status" value="1"/>
</dbReference>
<dbReference type="SUPFAM" id="SSF47459">
    <property type="entry name" value="HLH, helix-loop-helix DNA-binding domain"/>
    <property type="match status" value="1"/>
</dbReference>
<dbReference type="PROSITE" id="PS50888">
    <property type="entry name" value="BHLH"/>
    <property type="match status" value="1"/>
</dbReference>
<keyword id="KW-0010">Activator</keyword>
<keyword id="KW-0963">Cytoplasm</keyword>
<keyword id="KW-0238">DNA-binding</keyword>
<keyword id="KW-0936">Ethylene signaling pathway</keyword>
<keyword id="KW-0408">Iron</keyword>
<keyword id="KW-0539">Nucleus</keyword>
<keyword id="KW-1185">Reference proteome</keyword>
<keyword id="KW-0346">Stress response</keyword>
<keyword id="KW-0804">Transcription</keyword>
<keyword id="KW-0805">Transcription regulation</keyword>
<evidence type="ECO:0000255" key="1">
    <source>
        <dbReference type="PROSITE-ProRule" id="PRU00768"/>
    </source>
</evidence>
<evidence type="ECO:0000255" key="2">
    <source>
        <dbReference type="PROSITE-ProRule" id="PRU00981"/>
    </source>
</evidence>
<evidence type="ECO:0000269" key="3">
    <source>
    </source>
</evidence>
<evidence type="ECO:0000269" key="4">
    <source>
    </source>
</evidence>
<evidence type="ECO:0000269" key="5">
    <source>
    </source>
</evidence>
<evidence type="ECO:0000269" key="6">
    <source>
    </source>
</evidence>
<evidence type="ECO:0000269" key="7">
    <source>
    </source>
</evidence>
<evidence type="ECO:0000269" key="8">
    <source>
    </source>
</evidence>
<evidence type="ECO:0000269" key="9">
    <source>
    </source>
</evidence>
<evidence type="ECO:0000269" key="10">
    <source>
    </source>
</evidence>
<evidence type="ECO:0000269" key="11">
    <source>
    </source>
</evidence>
<evidence type="ECO:0000269" key="12">
    <source>
    </source>
</evidence>
<evidence type="ECO:0000269" key="13">
    <source>
    </source>
</evidence>
<evidence type="ECO:0000303" key="14">
    <source>
    </source>
</evidence>
<evidence type="ECO:0000303" key="15">
    <source>
    </source>
</evidence>
<evidence type="ECO:0000305" key="16"/>
<evidence type="ECO:0000312" key="17">
    <source>
        <dbReference type="EMBL" id="BAB64701.1"/>
    </source>
</evidence>
<evidence type="ECO:0000312" key="18">
    <source>
        <dbReference type="EMBL" id="EAZ14859.1"/>
    </source>
</evidence>
<reference key="1">
    <citation type="journal article" date="2006" name="J. Exp. Bot.">
        <title>Isolation and characterization of IRO2, a novel iron-regulated bHLH transcription factor in graminaceous plants.</title>
        <authorList>
            <person name="Ogo Y."/>
            <person name="Itai R.N."/>
            <person name="Nakanishi H."/>
            <person name="Inoue H."/>
            <person name="Kobayashi T."/>
            <person name="Suzuki M."/>
            <person name="Takahashi M."/>
            <person name="Mori S."/>
            <person name="Nishizawa N.K."/>
        </authorList>
    </citation>
    <scope>NUCLEOTIDE SEQUENCE [MRNA]</scope>
    <scope>FUNCTION</scope>
    <scope>INDUCTION BY IRON DEFICIENCY</scope>
    <scope>TISSUE SPECIFICITY</scope>
    <source>
        <strain>cv. Nipponbare</strain>
    </source>
</reference>
<reference key="2">
    <citation type="journal article" date="2002" name="Nature">
        <title>The genome sequence and structure of rice chromosome 1.</title>
        <authorList>
            <person name="Sasaki T."/>
            <person name="Matsumoto T."/>
            <person name="Yamamoto K."/>
            <person name="Sakata K."/>
            <person name="Baba T."/>
            <person name="Katayose Y."/>
            <person name="Wu J."/>
            <person name="Niimura Y."/>
            <person name="Cheng Z."/>
            <person name="Nagamura Y."/>
            <person name="Antonio B.A."/>
            <person name="Kanamori H."/>
            <person name="Hosokawa S."/>
            <person name="Masukawa M."/>
            <person name="Arikawa K."/>
            <person name="Chiden Y."/>
            <person name="Hayashi M."/>
            <person name="Okamoto M."/>
            <person name="Ando T."/>
            <person name="Aoki H."/>
            <person name="Arita K."/>
            <person name="Hamada M."/>
            <person name="Harada C."/>
            <person name="Hijishita S."/>
            <person name="Honda M."/>
            <person name="Ichikawa Y."/>
            <person name="Idonuma A."/>
            <person name="Iijima M."/>
            <person name="Ikeda M."/>
            <person name="Ikeno M."/>
            <person name="Ito S."/>
            <person name="Ito T."/>
            <person name="Ito Y."/>
            <person name="Ito Y."/>
            <person name="Iwabuchi A."/>
            <person name="Kamiya K."/>
            <person name="Karasawa W."/>
            <person name="Katagiri S."/>
            <person name="Kikuta A."/>
            <person name="Kobayashi N."/>
            <person name="Kono I."/>
            <person name="Machita K."/>
            <person name="Maehara T."/>
            <person name="Mizuno H."/>
            <person name="Mizubayashi T."/>
            <person name="Mukai Y."/>
            <person name="Nagasaki H."/>
            <person name="Nakashima M."/>
            <person name="Nakama Y."/>
            <person name="Nakamichi Y."/>
            <person name="Nakamura M."/>
            <person name="Namiki N."/>
            <person name="Negishi M."/>
            <person name="Ohta I."/>
            <person name="Ono N."/>
            <person name="Saji S."/>
            <person name="Sakai K."/>
            <person name="Shibata M."/>
            <person name="Shimokawa T."/>
            <person name="Shomura A."/>
            <person name="Song J."/>
            <person name="Takazaki Y."/>
            <person name="Terasawa K."/>
            <person name="Tsuji K."/>
            <person name="Waki K."/>
            <person name="Yamagata H."/>
            <person name="Yamane H."/>
            <person name="Yoshiki S."/>
            <person name="Yoshihara R."/>
            <person name="Yukawa K."/>
            <person name="Zhong H."/>
            <person name="Iwama H."/>
            <person name="Endo T."/>
            <person name="Ito H."/>
            <person name="Hahn J.H."/>
            <person name="Kim H.-I."/>
            <person name="Eun M.-Y."/>
            <person name="Yano M."/>
            <person name="Jiang J."/>
            <person name="Gojobori T."/>
        </authorList>
    </citation>
    <scope>NUCLEOTIDE SEQUENCE [LARGE SCALE GENOMIC DNA]</scope>
    <source>
        <strain>cv. Nipponbare</strain>
    </source>
</reference>
<reference key="3">
    <citation type="journal article" date="2005" name="Nature">
        <title>The map-based sequence of the rice genome.</title>
        <authorList>
            <consortium name="International rice genome sequencing project (IRGSP)"/>
        </authorList>
    </citation>
    <scope>NUCLEOTIDE SEQUENCE [LARGE SCALE GENOMIC DNA]</scope>
    <source>
        <strain>cv. Nipponbare</strain>
    </source>
</reference>
<reference key="4">
    <citation type="journal article" date="2008" name="Nucleic Acids Res.">
        <title>The rice annotation project database (RAP-DB): 2008 update.</title>
        <authorList>
            <consortium name="The rice annotation project (RAP)"/>
        </authorList>
    </citation>
    <scope>GENOME REANNOTATION</scope>
    <source>
        <strain>cv. Nipponbare</strain>
    </source>
</reference>
<reference key="5">
    <citation type="journal article" date="2013" name="Rice">
        <title>Improvement of the Oryza sativa Nipponbare reference genome using next generation sequence and optical map data.</title>
        <authorList>
            <person name="Kawahara Y."/>
            <person name="de la Bastide M."/>
            <person name="Hamilton J.P."/>
            <person name="Kanamori H."/>
            <person name="McCombie W.R."/>
            <person name="Ouyang S."/>
            <person name="Schwartz D.C."/>
            <person name="Tanaka T."/>
            <person name="Wu J."/>
            <person name="Zhou S."/>
            <person name="Childs K.L."/>
            <person name="Davidson R.M."/>
            <person name="Lin H."/>
            <person name="Quesada-Ocampo L."/>
            <person name="Vaillancourt B."/>
            <person name="Sakai H."/>
            <person name="Lee S.S."/>
            <person name="Kim J."/>
            <person name="Numa H."/>
            <person name="Itoh T."/>
            <person name="Buell C.R."/>
            <person name="Matsumoto T."/>
        </authorList>
    </citation>
    <scope>GENOME REANNOTATION</scope>
    <source>
        <strain>cv. Nipponbare</strain>
    </source>
</reference>
<reference key="6">
    <citation type="journal article" date="2005" name="PLoS Biol.">
        <title>The genomes of Oryza sativa: a history of duplications.</title>
        <authorList>
            <person name="Yu J."/>
            <person name="Wang J."/>
            <person name="Lin W."/>
            <person name="Li S."/>
            <person name="Li H."/>
            <person name="Zhou J."/>
            <person name="Ni P."/>
            <person name="Dong W."/>
            <person name="Hu S."/>
            <person name="Zeng C."/>
            <person name="Zhang J."/>
            <person name="Zhang Y."/>
            <person name="Li R."/>
            <person name="Xu Z."/>
            <person name="Li S."/>
            <person name="Li X."/>
            <person name="Zheng H."/>
            <person name="Cong L."/>
            <person name="Lin L."/>
            <person name="Yin J."/>
            <person name="Geng J."/>
            <person name="Li G."/>
            <person name="Shi J."/>
            <person name="Liu J."/>
            <person name="Lv H."/>
            <person name="Li J."/>
            <person name="Wang J."/>
            <person name="Deng Y."/>
            <person name="Ran L."/>
            <person name="Shi X."/>
            <person name="Wang X."/>
            <person name="Wu Q."/>
            <person name="Li C."/>
            <person name="Ren X."/>
            <person name="Wang J."/>
            <person name="Wang X."/>
            <person name="Li D."/>
            <person name="Liu D."/>
            <person name="Zhang X."/>
            <person name="Ji Z."/>
            <person name="Zhao W."/>
            <person name="Sun Y."/>
            <person name="Zhang Z."/>
            <person name="Bao J."/>
            <person name="Han Y."/>
            <person name="Dong L."/>
            <person name="Ji J."/>
            <person name="Chen P."/>
            <person name="Wu S."/>
            <person name="Liu J."/>
            <person name="Xiao Y."/>
            <person name="Bu D."/>
            <person name="Tan J."/>
            <person name="Yang L."/>
            <person name="Ye C."/>
            <person name="Zhang J."/>
            <person name="Xu J."/>
            <person name="Zhou Y."/>
            <person name="Yu Y."/>
            <person name="Zhang B."/>
            <person name="Zhuang S."/>
            <person name="Wei H."/>
            <person name="Liu B."/>
            <person name="Lei M."/>
            <person name="Yu H."/>
            <person name="Li Y."/>
            <person name="Xu H."/>
            <person name="Wei S."/>
            <person name="He X."/>
            <person name="Fang L."/>
            <person name="Zhang Z."/>
            <person name="Zhang Y."/>
            <person name="Huang X."/>
            <person name="Su Z."/>
            <person name="Tong W."/>
            <person name="Li J."/>
            <person name="Tong Z."/>
            <person name="Li S."/>
            <person name="Ye J."/>
            <person name="Wang L."/>
            <person name="Fang L."/>
            <person name="Lei T."/>
            <person name="Chen C.-S."/>
            <person name="Chen H.-C."/>
            <person name="Xu Z."/>
            <person name="Li H."/>
            <person name="Huang H."/>
            <person name="Zhang F."/>
            <person name="Xu H."/>
            <person name="Li N."/>
            <person name="Zhao C."/>
            <person name="Li S."/>
            <person name="Dong L."/>
            <person name="Huang Y."/>
            <person name="Li L."/>
            <person name="Xi Y."/>
            <person name="Qi Q."/>
            <person name="Li W."/>
            <person name="Zhang B."/>
            <person name="Hu W."/>
            <person name="Zhang Y."/>
            <person name="Tian X."/>
            <person name="Jiao Y."/>
            <person name="Liang X."/>
            <person name="Jin J."/>
            <person name="Gao L."/>
            <person name="Zheng W."/>
            <person name="Hao B."/>
            <person name="Liu S.-M."/>
            <person name="Wang W."/>
            <person name="Yuan L."/>
            <person name="Cao M."/>
            <person name="McDermott J."/>
            <person name="Samudrala R."/>
            <person name="Wang J."/>
            <person name="Wong G.K.-S."/>
            <person name="Yang H."/>
        </authorList>
    </citation>
    <scope>NUCLEOTIDE SEQUENCE [LARGE SCALE GENOMIC DNA]</scope>
    <source>
        <strain>cv. Nipponbare</strain>
    </source>
</reference>
<reference key="7">
    <citation type="journal article" date="2006" name="Plant Physiol.">
        <title>Genome-wide analysis of basic/helix-loop-helix transcription factor family in rice and Arabidopsis.</title>
        <authorList>
            <person name="Li X."/>
            <person name="Duan X."/>
            <person name="Jiang H."/>
            <person name="Sun Y."/>
            <person name="Tang Y."/>
            <person name="Yuan Z."/>
            <person name="Guo J."/>
            <person name="Liang W."/>
            <person name="Chen L."/>
            <person name="Yin J."/>
            <person name="Ma H."/>
            <person name="Wang J."/>
            <person name="Zhang D."/>
        </authorList>
    </citation>
    <scope>GENE FAMILY</scope>
    <scope>NOMENCLATURE</scope>
</reference>
<reference key="8">
    <citation type="journal article" date="2007" name="Plant J.">
        <title>The rice bHLH protein OsIRO2 is an essential regulator of the genes involved in Fe uptake under Fe-deficient conditions.</title>
        <authorList>
            <person name="Ogo Y."/>
            <person name="Itai R.N."/>
            <person name="Nakanishi H."/>
            <person name="Kobayashi T."/>
            <person name="Takahashi M."/>
            <person name="Mori S."/>
            <person name="Nishizawa N.K."/>
        </authorList>
    </citation>
    <scope>FUNCTION</scope>
    <scope>DISRUPTION PHENOTYPE</scope>
    <source>
        <strain>cv. Tsuki-no-hikari</strain>
    </source>
</reference>
<reference key="9">
    <citation type="journal article" date="2007" name="Proc. Natl. Acad. Sci. U.S.A.">
        <title>The transcription factor IDEF1 regulates the response to and tolerance of iron deficiency in plants.</title>
        <authorList>
            <person name="Kobayashi T."/>
            <person name="Ogo Y."/>
            <person name="Nakanishi Itai R."/>
            <person name="Nakanishi H."/>
            <person name="Takahashi M."/>
            <person name="Mori S."/>
            <person name="Nishizawa N.K."/>
        </authorList>
    </citation>
    <scope>INDUCTION BY IRON DEFICIENCY</scope>
    <source>
        <strain>cv. Nipponbare</strain>
    </source>
</reference>
<reference key="10">
    <citation type="journal article" date="2009" name="Plant J.">
        <title>The rice transcription factor IDEF1 is essential for the early response to iron deficiency, and induces vegetative expression of late embryogenesis abundant genes.</title>
        <authorList>
            <person name="Kobayashi T."/>
            <person name="Itai R.N."/>
            <person name="Ogo Y."/>
            <person name="Kakei Y."/>
            <person name="Nakanishi H."/>
            <person name="Takahashi M."/>
            <person name="Nishizawa N.K."/>
        </authorList>
    </citation>
    <scope>INDUCTION BY IRON DEFICIENCY</scope>
    <source>
        <strain>cv. Tsuki-no-hikari</strain>
    </source>
</reference>
<reference key="11">
    <citation type="journal article" date="2011" name="J. Exp. Bot.">
        <title>Ethylene is involved in the regulation of iron homeostasis by regulating the expression of iron-acquisition-related genes in Oryza sativa.</title>
        <authorList>
            <person name="Wu J."/>
            <person name="Wang C."/>
            <person name="Zheng L."/>
            <person name="Wang L."/>
            <person name="Chen Y."/>
            <person name="Whelan J."/>
            <person name="Shou H."/>
        </authorList>
    </citation>
    <scope>FUNCTION</scope>
    <scope>DISRUPTION PHENOTYPE</scope>
    <scope>INDUCTION BY IRON DEFICIENCY AND ETHYLENE</scope>
    <source>
        <strain>cv. Nipponbare</strain>
    </source>
</reference>
<reference key="12">
    <citation type="journal article" date="2011" name="Plant Mol. Biol.">
        <title>OsIRO2 is responsible for iron utilization in rice and improves growth and yield in calcareous soil.</title>
        <authorList>
            <person name="Ogo Y."/>
            <person name="Itai R.N."/>
            <person name="Kobayashi T."/>
            <person name="Aung M.S."/>
            <person name="Nakanishi H."/>
            <person name="Nishizawa N.K."/>
        </authorList>
    </citation>
    <scope>FUNCTION</scope>
    <scope>DISRUPTION PHENOTYPE</scope>
    <scope>TISSUE SPECIFICITY</scope>
    <scope>DEVELOPMENTAL STAGE</scope>
    <scope>INDUCTION BY IRON DEFICIENCY</scope>
    <source>
        <strain>cv. Nipponbare</strain>
    </source>
</reference>
<reference key="13">
    <citation type="journal article" date="2013" name="Rice">
        <title>Rice genes involved in phytosiderophore biosynthesis are synchronously regulated during the early stages of iron deficiency in roots.</title>
        <authorList>
            <person name="Itai R.N."/>
            <person name="Ogo Y."/>
            <person name="Kobayashi T."/>
            <person name="Nakanishi H."/>
            <person name="Nishizawa N.K."/>
        </authorList>
    </citation>
    <scope>INDUCTION BY IRON DEFICIENCY</scope>
    <source>
        <strain>cv. Nipponbare</strain>
    </source>
</reference>
<reference key="14">
    <citation type="journal article" date="2013" name="Rice">
        <title>Iron biofortification of rice using different transgenic approaches.</title>
        <authorList>
            <person name="Masuda H."/>
            <person name="Aung M.S."/>
            <person name="Nishizawa N.K."/>
        </authorList>
    </citation>
    <scope>REVIEW</scope>
</reference>
<reference key="15">
    <citation type="journal article" date="2014" name="Rice">
        <title>Iron deficiency responses in rice roots.</title>
        <authorList>
            <person name="Kobayashi T."/>
            <person name="Nakanishi Itai R."/>
            <person name="Nishizawa N.K."/>
        </authorList>
    </citation>
    <scope>FUNCTION</scope>
    <scope>INDUCTION BY IRON DEFICIENCY</scope>
    <scope>REVIEW</scope>
</reference>
<reference key="16">
    <citation type="journal article" date="2015" name="Front. Plant Sci.">
        <title>Nitric oxide alleviated arsenic toxicity by modulation of antioxidants and thiol metabolism in rice (Oryza sativa L.).</title>
        <authorList>
            <person name="Singh A.P."/>
            <person name="Dixit G."/>
            <person name="Kumar A."/>
            <person name="Mishra S."/>
            <person name="Singh P.K."/>
            <person name="Dwivedi S."/>
            <person name="Trivedi P.K."/>
            <person name="Chakrabarty D."/>
            <person name="Mallick S."/>
            <person name="Pandey V."/>
            <person name="Dhankher O.P."/>
            <person name="Tripathi R.D."/>
        </authorList>
    </citation>
    <scope>INDUCTION BY NITRIC OXIDE AND ARSENATE</scope>
</reference>
<reference key="17">
    <citation type="journal article" date="2016" name="Plant Cell Environ.">
        <title>Variation of DNA methylation patterns associated with gene expression in rice (Oryza sativa) exposed to cadmium.</title>
        <authorList>
            <person name="Feng S.J."/>
            <person name="Liu X.S."/>
            <person name="Tao H."/>
            <person name="Tan S.K."/>
            <person name="Chu S.S."/>
            <person name="Oono Y."/>
            <person name="Zhang X.D."/>
            <person name="Chen J."/>
            <person name="Yang Z.M."/>
        </authorList>
    </citation>
    <scope>INDUCTION BY CADMIUM</scope>
</reference>
<reference key="18">
    <citation type="journal article" date="2020" name="New Phytol.">
        <title>A transcription factor OsbHLH156 regulates Strategy II iron acquisition through localizing IRO2 to the nucleus in rice.</title>
        <authorList>
            <person name="Wang S."/>
            <person name="Li L."/>
            <person name="Ying Y."/>
            <person name="Wang J."/>
            <person name="Shao J.F."/>
            <person name="Yamaji N."/>
            <person name="Whelan J."/>
            <person name="Ma J.F."/>
            <person name="Shou H."/>
        </authorList>
    </citation>
    <scope>HOMODIMERIZATION</scope>
    <scope>INTERACTION WITH BHLH156</scope>
    <scope>SUBCELLULAR LOCATION</scope>
</reference>
<protein>
    <recommendedName>
        <fullName evidence="14">Protein IRON-RELATED TRANSCRIPTION FACTOR 2</fullName>
        <shortName evidence="14">OsIRO2</shortName>
    </recommendedName>
    <alternativeName>
        <fullName evidence="15">Basic helix-loop-helix protein 56</fullName>
        <shortName evidence="15">OsbHLH056</shortName>
    </alternativeName>
</protein>
<organism>
    <name type="scientific">Oryza sativa subsp. japonica</name>
    <name type="common">Rice</name>
    <dbReference type="NCBI Taxonomy" id="39947"/>
    <lineage>
        <taxon>Eukaryota</taxon>
        <taxon>Viridiplantae</taxon>
        <taxon>Streptophyta</taxon>
        <taxon>Embryophyta</taxon>
        <taxon>Tracheophyta</taxon>
        <taxon>Spermatophyta</taxon>
        <taxon>Magnoliopsida</taxon>
        <taxon>Liliopsida</taxon>
        <taxon>Poales</taxon>
        <taxon>Poaceae</taxon>
        <taxon>BOP clade</taxon>
        <taxon>Oryzoideae</taxon>
        <taxon>Oryzeae</taxon>
        <taxon>Oryzinae</taxon>
        <taxon>Oryza</taxon>
        <taxon>Oryza sativa</taxon>
    </lineage>
</organism>